<sequence>MTIAFQLAVFALIATSSVLVISVPLVFASPDGWSNNKNVVFSGTSLWIGLVFLVAILNSLIS</sequence>
<proteinExistence type="inferred from homology"/>
<evidence type="ECO:0000255" key="1">
    <source>
        <dbReference type="HAMAP-Rule" id="MF_00644"/>
    </source>
</evidence>
<reference key="1">
    <citation type="journal article" date="2007" name="Theor. Appl. Genet.">
        <title>Complete chloroplast genome sequences of Hordeum vulgare, Sorghum bicolor and Agrostis stolonifera, and comparative analyses with other grass genomes.</title>
        <authorList>
            <person name="Saski C."/>
            <person name="Lee S.-B."/>
            <person name="Fjellheim S."/>
            <person name="Guda C."/>
            <person name="Jansen R.K."/>
            <person name="Luo H."/>
            <person name="Tomkins J."/>
            <person name="Rognli O.A."/>
            <person name="Daniell H."/>
            <person name="Clarke J.L."/>
        </authorList>
    </citation>
    <scope>NUCLEOTIDE SEQUENCE [LARGE SCALE GENOMIC DNA]</scope>
    <source>
        <strain>cv. Penn A-4</strain>
    </source>
</reference>
<protein>
    <recommendedName>
        <fullName evidence="1">Photosystem II reaction center protein Z</fullName>
        <shortName evidence="1">PSII-Z</shortName>
    </recommendedName>
</protein>
<accession>A1E9Z5</accession>
<dbReference type="EMBL" id="EF115543">
    <property type="protein sequence ID" value="ABK79567.1"/>
    <property type="molecule type" value="Genomic_DNA"/>
</dbReference>
<dbReference type="RefSeq" id="YP_874723.1">
    <property type="nucleotide sequence ID" value="NC_008591.1"/>
</dbReference>
<dbReference type="SMR" id="A1E9Z5"/>
<dbReference type="GeneID" id="4524980"/>
<dbReference type="GO" id="GO:0009535">
    <property type="term" value="C:chloroplast thylakoid membrane"/>
    <property type="evidence" value="ECO:0007669"/>
    <property type="project" value="UniProtKB-SubCell"/>
</dbReference>
<dbReference type="GO" id="GO:0009539">
    <property type="term" value="C:photosystem II reaction center"/>
    <property type="evidence" value="ECO:0007669"/>
    <property type="project" value="InterPro"/>
</dbReference>
<dbReference type="GO" id="GO:0015979">
    <property type="term" value="P:photosynthesis"/>
    <property type="evidence" value="ECO:0007669"/>
    <property type="project" value="UniProtKB-UniRule"/>
</dbReference>
<dbReference type="GO" id="GO:0042549">
    <property type="term" value="P:photosystem II stabilization"/>
    <property type="evidence" value="ECO:0007669"/>
    <property type="project" value="InterPro"/>
</dbReference>
<dbReference type="FunFam" id="1.10.287.740:FF:000001">
    <property type="entry name" value="Photosystem II reaction center protein Z"/>
    <property type="match status" value="1"/>
</dbReference>
<dbReference type="Gene3D" id="1.10.287.740">
    <property type="entry name" value="Photosystem II PsbZ, reaction centre"/>
    <property type="match status" value="1"/>
</dbReference>
<dbReference type="HAMAP" id="MF_00644">
    <property type="entry name" value="PSII_PsbZ"/>
    <property type="match status" value="1"/>
</dbReference>
<dbReference type="InterPro" id="IPR002644">
    <property type="entry name" value="PSII_PsbZ"/>
</dbReference>
<dbReference type="InterPro" id="IPR036512">
    <property type="entry name" value="PSII_PsbZ_sf"/>
</dbReference>
<dbReference type="NCBIfam" id="TIGR03043">
    <property type="entry name" value="PS_II_psbZ"/>
    <property type="match status" value="1"/>
</dbReference>
<dbReference type="PANTHER" id="PTHR34971">
    <property type="entry name" value="PHOTOSYSTEM II REACTION CENTER PROTEIN Z"/>
    <property type="match status" value="1"/>
</dbReference>
<dbReference type="PANTHER" id="PTHR34971:SF2">
    <property type="entry name" value="PHOTOSYSTEM II REACTION CENTER PROTEIN Z"/>
    <property type="match status" value="1"/>
</dbReference>
<dbReference type="Pfam" id="PF01737">
    <property type="entry name" value="Ycf9"/>
    <property type="match status" value="1"/>
</dbReference>
<dbReference type="SUPFAM" id="SSF161055">
    <property type="entry name" value="PsbZ-like"/>
    <property type="match status" value="1"/>
</dbReference>
<geneLocation type="chloroplast"/>
<feature type="chain" id="PRO_0000277209" description="Photosystem II reaction center protein Z">
    <location>
        <begin position="1"/>
        <end position="62"/>
    </location>
</feature>
<feature type="transmembrane region" description="Helical" evidence="1">
    <location>
        <begin position="8"/>
        <end position="28"/>
    </location>
</feature>
<feature type="transmembrane region" description="Helical" evidence="1">
    <location>
        <begin position="41"/>
        <end position="61"/>
    </location>
</feature>
<name>PSBZ_AGRST</name>
<gene>
    <name evidence="1" type="primary">psbZ</name>
</gene>
<organism>
    <name type="scientific">Agrostis stolonifera</name>
    <name type="common">Creeping bentgrass</name>
    <dbReference type="NCBI Taxonomy" id="63632"/>
    <lineage>
        <taxon>Eukaryota</taxon>
        <taxon>Viridiplantae</taxon>
        <taxon>Streptophyta</taxon>
        <taxon>Embryophyta</taxon>
        <taxon>Tracheophyta</taxon>
        <taxon>Spermatophyta</taxon>
        <taxon>Magnoliopsida</taxon>
        <taxon>Liliopsida</taxon>
        <taxon>Poales</taxon>
        <taxon>Poaceae</taxon>
        <taxon>BOP clade</taxon>
        <taxon>Pooideae</taxon>
        <taxon>Poodae</taxon>
        <taxon>Poeae</taxon>
        <taxon>Poeae Chloroplast Group 1 (Aveneae type)</taxon>
        <taxon>Agrostidodinae</taxon>
        <taxon>Agrostidinae</taxon>
        <taxon>Agrostis</taxon>
    </lineage>
</organism>
<comment type="function">
    <text evidence="1">May control the interaction of photosystem II (PSII) cores with the light-harvesting antenna, regulates electron flow through the 2 photosystem reaction centers. PSII is a light-driven water plastoquinone oxidoreductase, using light energy to abstract electrons from H(2)O, generating a proton gradient subsequently used for ATP formation.</text>
</comment>
<comment type="subunit">
    <text evidence="1">PSII is composed of 1 copy each of membrane proteins PsbA, PsbB, PsbC, PsbD, PsbE, PsbF, PsbH, PsbI, PsbJ, PsbK, PsbL, PsbM, PsbT, PsbY, PsbZ, Psb30/Ycf12, at least 3 peripheral proteins of the oxygen-evolving complex and a large number of cofactors. It forms dimeric complexes.</text>
</comment>
<comment type="subcellular location">
    <subcellularLocation>
        <location evidence="1">Plastid</location>
        <location evidence="1">Chloroplast thylakoid membrane</location>
        <topology evidence="1">Multi-pass membrane protein</topology>
    </subcellularLocation>
</comment>
<comment type="similarity">
    <text evidence="1">Belongs to the PsbZ family.</text>
</comment>
<keyword id="KW-0150">Chloroplast</keyword>
<keyword id="KW-0472">Membrane</keyword>
<keyword id="KW-0602">Photosynthesis</keyword>
<keyword id="KW-0604">Photosystem II</keyword>
<keyword id="KW-0934">Plastid</keyword>
<keyword id="KW-0674">Reaction center</keyword>
<keyword id="KW-0793">Thylakoid</keyword>
<keyword id="KW-0812">Transmembrane</keyword>
<keyword id="KW-1133">Transmembrane helix</keyword>